<organism>
    <name type="scientific">Mus musculus</name>
    <name type="common">Mouse</name>
    <dbReference type="NCBI Taxonomy" id="10090"/>
    <lineage>
        <taxon>Eukaryota</taxon>
        <taxon>Metazoa</taxon>
        <taxon>Chordata</taxon>
        <taxon>Craniata</taxon>
        <taxon>Vertebrata</taxon>
        <taxon>Euteleostomi</taxon>
        <taxon>Mammalia</taxon>
        <taxon>Eutheria</taxon>
        <taxon>Euarchontoglires</taxon>
        <taxon>Glires</taxon>
        <taxon>Rodentia</taxon>
        <taxon>Myomorpha</taxon>
        <taxon>Muroidea</taxon>
        <taxon>Muridae</taxon>
        <taxon>Murinae</taxon>
        <taxon>Mus</taxon>
        <taxon>Mus</taxon>
    </lineage>
</organism>
<comment type="function">
    <text evidence="1 4 5 6 7 8">Lipase that catalyzes the hydrolysis of arachidonic acid (AA)-esterified diacylglycerols (DAGs) to produce the principal endocannabinoid, 2-arachidonoylglycerol (2-AG) which can be further cleaved by downstream enzymes to release arachidonic acid (AA) for cyclooxygenase (COX)-mediated eicosanoid production (PubMed:20147530, PubMed:20159446, PubMed:23103940). Preferentially hydrolyzes DAGs at the sn-1 position in a calcium-dependent manner and has negligible activity against other lipids including monoacylglycerols and phospholipids (By similarity). Plays a key role in the regulation of 2-AG and AA pools utilized by COX1/2 to generate lipid mediators of macrophage and microglia inflammatory responses (PubMed:23103940, PubMed:26779719). Also functions as a polyunsaturated fatty acids-specific triacylglycerol lipase in macrophages (PubMed:31991095). Plays an important role to support the metabolic and signaling demands of macrophages (PubMed:23103940, PubMed:31991095).</text>
</comment>
<comment type="catalytic activity">
    <reaction evidence="6">
        <text>a 1,2-diacyl-sn-glycerol + H2O = a 2-acylglycerol + a fatty acid + H(+)</text>
        <dbReference type="Rhea" id="RHEA:33275"/>
        <dbReference type="ChEBI" id="CHEBI:15377"/>
        <dbReference type="ChEBI" id="CHEBI:15378"/>
        <dbReference type="ChEBI" id="CHEBI:17389"/>
        <dbReference type="ChEBI" id="CHEBI:17815"/>
        <dbReference type="ChEBI" id="CHEBI:28868"/>
        <dbReference type="EC" id="3.1.1.116"/>
    </reaction>
    <physiologicalReaction direction="left-to-right" evidence="15">
        <dbReference type="Rhea" id="RHEA:33276"/>
    </physiologicalReaction>
</comment>
<comment type="catalytic activity">
    <reaction evidence="6">
        <text>1-octadecanoyl-2-(5Z,8Z,11Z,14Z-eicosatetraenoyl)-sn-glycerol + H2O = 2-(5Z,8Z,11Z,14Z-eicosatetraenoyl)-glycerol + octadecanoate + H(+)</text>
        <dbReference type="Rhea" id="RHEA:38507"/>
        <dbReference type="ChEBI" id="CHEBI:15377"/>
        <dbReference type="ChEBI" id="CHEBI:15378"/>
        <dbReference type="ChEBI" id="CHEBI:25629"/>
        <dbReference type="ChEBI" id="CHEBI:52392"/>
        <dbReference type="ChEBI" id="CHEBI:75728"/>
    </reaction>
</comment>
<comment type="catalytic activity">
    <reaction evidence="1">
        <text>1,2-di-(9Z-octadecenoyl)-sn-glycerol + H2O = 2-(9Z-octadecenoyl)-glycerol + (9Z)-octadecenoate + H(+)</text>
        <dbReference type="Rhea" id="RHEA:38511"/>
        <dbReference type="ChEBI" id="CHEBI:15377"/>
        <dbReference type="ChEBI" id="CHEBI:15378"/>
        <dbReference type="ChEBI" id="CHEBI:30823"/>
        <dbReference type="ChEBI" id="CHEBI:52333"/>
        <dbReference type="ChEBI" id="CHEBI:73990"/>
    </reaction>
</comment>
<comment type="catalytic activity">
    <reaction evidence="1">
        <text>1-(9Z-octadecenoyl)-2-(5Z,8Z,11Z,14Z-eicosatetraenoyl)-sn-glycerol + H2O = 2-(5Z,8Z,11Z,14Z-eicosatetraenoyl)-glycerol + (9Z)-octadecenoate + H(+)</text>
        <dbReference type="Rhea" id="RHEA:38515"/>
        <dbReference type="ChEBI" id="CHEBI:15377"/>
        <dbReference type="ChEBI" id="CHEBI:15378"/>
        <dbReference type="ChEBI" id="CHEBI:30823"/>
        <dbReference type="ChEBI" id="CHEBI:52392"/>
        <dbReference type="ChEBI" id="CHEBI:75449"/>
    </reaction>
</comment>
<comment type="catalytic activity">
    <reaction evidence="1">
        <text>1-(9Z-octadecenoyl)-2-octadecanoyl-sn-glycerol + H2O = 2-octadecanoylglycerol + (9Z)-octadecenoate + H(+)</text>
        <dbReference type="Rhea" id="RHEA:38519"/>
        <dbReference type="ChEBI" id="CHEBI:15377"/>
        <dbReference type="ChEBI" id="CHEBI:15378"/>
        <dbReference type="ChEBI" id="CHEBI:30823"/>
        <dbReference type="ChEBI" id="CHEBI:75448"/>
        <dbReference type="ChEBI" id="CHEBI:75456"/>
    </reaction>
</comment>
<comment type="catalytic activity">
    <reaction evidence="1">
        <text>1-(9Z-octadecenoyl)-2-(9Z,12Z-octadecadienoyl)-sn-glycerol + H2O = 2-(9Z,12Z-octadecadienoyl)-glycerol + (9Z)-octadecenoate + H(+)</text>
        <dbReference type="Rhea" id="RHEA:38523"/>
        <dbReference type="ChEBI" id="CHEBI:15377"/>
        <dbReference type="ChEBI" id="CHEBI:15378"/>
        <dbReference type="ChEBI" id="CHEBI:30823"/>
        <dbReference type="ChEBI" id="CHEBI:75450"/>
        <dbReference type="ChEBI" id="CHEBI:75457"/>
    </reaction>
</comment>
<comment type="catalytic activity">
    <reaction evidence="1">
        <text>1-(9Z-octadecenoyl)-2-O-(5Z,8Z,11Z,14Z-eicosatetraenyl)-sn-glycerol + H2O = 2-O-(5Z,8Z,11Z,14Z)-eicosatetraenylglycerol + (9Z)-octadecenoate + H(+)</text>
        <dbReference type="Rhea" id="RHEA:38527"/>
        <dbReference type="ChEBI" id="CHEBI:15377"/>
        <dbReference type="ChEBI" id="CHEBI:15378"/>
        <dbReference type="ChEBI" id="CHEBI:30823"/>
        <dbReference type="ChEBI" id="CHEBI:75913"/>
        <dbReference type="ChEBI" id="CHEBI:75914"/>
    </reaction>
</comment>
<comment type="catalytic activity">
    <reaction evidence="8">
        <text>a triacylglycerol + H2O = a diacylglycerol + a fatty acid + H(+)</text>
        <dbReference type="Rhea" id="RHEA:12044"/>
        <dbReference type="ChEBI" id="CHEBI:15377"/>
        <dbReference type="ChEBI" id="CHEBI:15378"/>
        <dbReference type="ChEBI" id="CHEBI:17855"/>
        <dbReference type="ChEBI" id="CHEBI:18035"/>
        <dbReference type="ChEBI" id="CHEBI:28868"/>
        <dbReference type="EC" id="3.1.1.3"/>
    </reaction>
    <physiologicalReaction direction="left-to-right" evidence="16">
        <dbReference type="Rhea" id="RHEA:12045"/>
    </physiologicalReaction>
</comment>
<comment type="catalytic activity">
    <reaction evidence="8">
        <text>1,2,3-tri-(5Z,8Z,11Z,14Z-eicosatetraenoyl)-glycerol + H2O = 1,2-di-(5Z,8Z,11Z,14Z-eicosatetraenoyl)-glycerol + (5Z,8Z,11Z,14Z)-eicosatetraenoate + H(+)</text>
        <dbReference type="Rhea" id="RHEA:63432"/>
        <dbReference type="ChEBI" id="CHEBI:15377"/>
        <dbReference type="ChEBI" id="CHEBI:15378"/>
        <dbReference type="ChEBI" id="CHEBI:32395"/>
        <dbReference type="ChEBI" id="CHEBI:147308"/>
        <dbReference type="ChEBI" id="CHEBI:228166"/>
    </reaction>
    <physiologicalReaction direction="left-to-right" evidence="16">
        <dbReference type="Rhea" id="RHEA:63433"/>
    </physiologicalReaction>
</comment>
<comment type="catalytic activity">
    <reaction evidence="8">
        <text>1,2,3-(4Z,7Z,10Z,13Z,16Z,19Z-docosahexaenoyl)-glycerol + H2O = 1,2-di-(4Z,7Z,10Z,13Z,16Z,19Z-docosahexaenoyl)-glycerol + (4Z,7Z,10Z,13Z,16Z,19Z)-docosahexaenoate + H(+)</text>
        <dbReference type="Rhea" id="RHEA:63436"/>
        <dbReference type="ChEBI" id="CHEBI:15377"/>
        <dbReference type="ChEBI" id="CHEBI:15378"/>
        <dbReference type="ChEBI" id="CHEBI:77016"/>
        <dbReference type="ChEBI" id="CHEBI:147311"/>
        <dbReference type="ChEBI" id="CHEBI:228170"/>
    </reaction>
</comment>
<comment type="cofactor">
    <cofactor evidence="1">
        <name>Ca(2+)</name>
        <dbReference type="ChEBI" id="CHEBI:29108"/>
    </cofactor>
</comment>
<comment type="activity regulation">
    <text evidence="1 6 8">Inhibited by the 1,2,3-triazole urea covalent inhibitors KT109 and KT172 (PubMed:23103940, PubMed:31991095). Inhibited by p-hydroxy-mercuri-benzoate and HgCl(2), but not by PMSF. Also inhibited by RHC80267, a drug that blocks 2-AG formation (By similarity).</text>
</comment>
<comment type="subcellular location">
    <subcellularLocation>
        <location evidence="16">Cell membrane</location>
        <topology evidence="2">Multi-pass membrane protein</topology>
    </subcellularLocation>
</comment>
<comment type="tissue specificity">
    <text evidence="3 4 6 7 8">Expressed in liver and immune cells such as macrophages and microglias (PubMed:20147530, PubMed:23103940, PubMed:26779719, PubMed:31991095). In embryonic brains present in axonal tracts, while in adults localizes to dendritic fields, correlating with the developmental change in requirement for 2-AG synthesis from the pre- to the postsynaptic compartment (at protein level) (PubMed:14610053).</text>
</comment>
<comment type="disruption phenotype">
    <text evidence="4 5 6 7">Deficient mice are viable, fertile and display normal physiological behaviors (PubMed:20147530, PubMed:20159446). Levels of 2-AG are reduced by up to 90% in liver (PubMed:20147530). In contrast, brain 2-AG and arachidonic acid (AA) content are unaltered in deficient mice (PubMed:20159446, PubMed:23103940, PubMed:26779719). However one report describes a decreased by up to 50% of 2-AG in the brain (PubMed:20147530). Disruption of Daglb results in depletion of 2-AG, AA, and prostaglandins (PGE2 and PGD2) in microglia and macrophages, and also attenuated pro-inflammatorycytokine (TNF-alpha) signaling in response to lipopolysaccharide stimulation (PubMed:23103940, PubMed:26779719). In contrast, lipid profiles of neurons are not impacted (PubMed:26779719). Endocannabinoid-mediated retrograde synaptic suppression is intact in deficient mice (PubMed:20159446).</text>
</comment>
<comment type="similarity">
    <text evidence="14">Belongs to the AB hydrolase superfamily. Lipase family.</text>
</comment>
<comment type="sequence caution" evidence="14">
    <conflict type="frameshift">
        <sequence resource="EMBL-CDS" id="BAC39734"/>
    </conflict>
</comment>
<protein>
    <recommendedName>
        <fullName evidence="13">Diacylglycerol lipase-beta</fullName>
        <shortName evidence="13">DAGL-beta</shortName>
        <shortName evidence="10 12">DAGLbeta</shortName>
        <shortName evidence="11">DGL-beta</shortName>
        <ecNumber evidence="6">3.1.1.116</ecNumber>
    </recommendedName>
    <alternativeName>
        <fullName evidence="13">PUFA-specific triacylglycerol lipase</fullName>
        <ecNumber evidence="8">3.1.1.3</ecNumber>
    </alternativeName>
    <alternativeName>
        <fullName evidence="9">Sn1-specific diacylglycerol lipase beta</fullName>
    </alternativeName>
</protein>
<evidence type="ECO:0000250" key="1">
    <source>
        <dbReference type="UniProtKB" id="Q8NCG7"/>
    </source>
</evidence>
<evidence type="ECO:0000255" key="2"/>
<evidence type="ECO:0000269" key="3">
    <source>
    </source>
</evidence>
<evidence type="ECO:0000269" key="4">
    <source>
    </source>
</evidence>
<evidence type="ECO:0000269" key="5">
    <source>
    </source>
</evidence>
<evidence type="ECO:0000269" key="6">
    <source>
    </source>
</evidence>
<evidence type="ECO:0000269" key="7">
    <source>
    </source>
</evidence>
<evidence type="ECO:0000269" key="8">
    <source>
    </source>
</evidence>
<evidence type="ECO:0000303" key="9">
    <source>
    </source>
</evidence>
<evidence type="ECO:0000303" key="10">
    <source>
    </source>
</evidence>
<evidence type="ECO:0000303" key="11">
    <source>
    </source>
</evidence>
<evidence type="ECO:0000303" key="12">
    <source>
    </source>
</evidence>
<evidence type="ECO:0000303" key="13">
    <source>
    </source>
</evidence>
<evidence type="ECO:0000305" key="14"/>
<evidence type="ECO:0000305" key="15">
    <source>
    </source>
</evidence>
<evidence type="ECO:0000305" key="16">
    <source>
    </source>
</evidence>
<evidence type="ECO:0007744" key="17">
    <source>
    </source>
</evidence>
<name>DGLB_MOUSE</name>
<reference key="1">
    <citation type="journal article" date="2004" name="Genome Res.">
        <title>The status, quality, and expansion of the NIH full-length cDNA project: the Mammalian Gene Collection (MGC).</title>
        <authorList>
            <consortium name="The MGC Project Team"/>
        </authorList>
    </citation>
    <scope>NUCLEOTIDE SEQUENCE [LARGE SCALE MRNA]</scope>
    <source>
        <strain>FVB/N</strain>
        <tissue>Salivary gland</tissue>
    </source>
</reference>
<reference key="2">
    <citation type="journal article" date="2005" name="Science">
        <title>The transcriptional landscape of the mammalian genome.</title>
        <authorList>
            <person name="Carninci P."/>
            <person name="Kasukawa T."/>
            <person name="Katayama S."/>
            <person name="Gough J."/>
            <person name="Frith M.C."/>
            <person name="Maeda N."/>
            <person name="Oyama R."/>
            <person name="Ravasi T."/>
            <person name="Lenhard B."/>
            <person name="Wells C."/>
            <person name="Kodzius R."/>
            <person name="Shimokawa K."/>
            <person name="Bajic V.B."/>
            <person name="Brenner S.E."/>
            <person name="Batalov S."/>
            <person name="Forrest A.R."/>
            <person name="Zavolan M."/>
            <person name="Davis M.J."/>
            <person name="Wilming L.G."/>
            <person name="Aidinis V."/>
            <person name="Allen J.E."/>
            <person name="Ambesi-Impiombato A."/>
            <person name="Apweiler R."/>
            <person name="Aturaliya R.N."/>
            <person name="Bailey T.L."/>
            <person name="Bansal M."/>
            <person name="Baxter L."/>
            <person name="Beisel K.W."/>
            <person name="Bersano T."/>
            <person name="Bono H."/>
            <person name="Chalk A.M."/>
            <person name="Chiu K.P."/>
            <person name="Choudhary V."/>
            <person name="Christoffels A."/>
            <person name="Clutterbuck D.R."/>
            <person name="Crowe M.L."/>
            <person name="Dalla E."/>
            <person name="Dalrymple B.P."/>
            <person name="de Bono B."/>
            <person name="Della Gatta G."/>
            <person name="di Bernardo D."/>
            <person name="Down T."/>
            <person name="Engstrom P."/>
            <person name="Fagiolini M."/>
            <person name="Faulkner G."/>
            <person name="Fletcher C.F."/>
            <person name="Fukushima T."/>
            <person name="Furuno M."/>
            <person name="Futaki S."/>
            <person name="Gariboldi M."/>
            <person name="Georgii-Hemming P."/>
            <person name="Gingeras T.R."/>
            <person name="Gojobori T."/>
            <person name="Green R.E."/>
            <person name="Gustincich S."/>
            <person name="Harbers M."/>
            <person name="Hayashi Y."/>
            <person name="Hensch T.K."/>
            <person name="Hirokawa N."/>
            <person name="Hill D."/>
            <person name="Huminiecki L."/>
            <person name="Iacono M."/>
            <person name="Ikeo K."/>
            <person name="Iwama A."/>
            <person name="Ishikawa T."/>
            <person name="Jakt M."/>
            <person name="Kanapin A."/>
            <person name="Katoh M."/>
            <person name="Kawasawa Y."/>
            <person name="Kelso J."/>
            <person name="Kitamura H."/>
            <person name="Kitano H."/>
            <person name="Kollias G."/>
            <person name="Krishnan S.P."/>
            <person name="Kruger A."/>
            <person name="Kummerfeld S.K."/>
            <person name="Kurochkin I.V."/>
            <person name="Lareau L.F."/>
            <person name="Lazarevic D."/>
            <person name="Lipovich L."/>
            <person name="Liu J."/>
            <person name="Liuni S."/>
            <person name="McWilliam S."/>
            <person name="Madan Babu M."/>
            <person name="Madera M."/>
            <person name="Marchionni L."/>
            <person name="Matsuda H."/>
            <person name="Matsuzawa S."/>
            <person name="Miki H."/>
            <person name="Mignone F."/>
            <person name="Miyake S."/>
            <person name="Morris K."/>
            <person name="Mottagui-Tabar S."/>
            <person name="Mulder N."/>
            <person name="Nakano N."/>
            <person name="Nakauchi H."/>
            <person name="Ng P."/>
            <person name="Nilsson R."/>
            <person name="Nishiguchi S."/>
            <person name="Nishikawa S."/>
            <person name="Nori F."/>
            <person name="Ohara O."/>
            <person name="Okazaki Y."/>
            <person name="Orlando V."/>
            <person name="Pang K.C."/>
            <person name="Pavan W.J."/>
            <person name="Pavesi G."/>
            <person name="Pesole G."/>
            <person name="Petrovsky N."/>
            <person name="Piazza S."/>
            <person name="Reed J."/>
            <person name="Reid J.F."/>
            <person name="Ring B.Z."/>
            <person name="Ringwald M."/>
            <person name="Rost B."/>
            <person name="Ruan Y."/>
            <person name="Salzberg S.L."/>
            <person name="Sandelin A."/>
            <person name="Schneider C."/>
            <person name="Schoenbach C."/>
            <person name="Sekiguchi K."/>
            <person name="Semple C.A."/>
            <person name="Seno S."/>
            <person name="Sessa L."/>
            <person name="Sheng Y."/>
            <person name="Shibata Y."/>
            <person name="Shimada H."/>
            <person name="Shimada K."/>
            <person name="Silva D."/>
            <person name="Sinclair B."/>
            <person name="Sperling S."/>
            <person name="Stupka E."/>
            <person name="Sugiura K."/>
            <person name="Sultana R."/>
            <person name="Takenaka Y."/>
            <person name="Taki K."/>
            <person name="Tammoja K."/>
            <person name="Tan S.L."/>
            <person name="Tang S."/>
            <person name="Taylor M.S."/>
            <person name="Tegner J."/>
            <person name="Teichmann S.A."/>
            <person name="Ueda H.R."/>
            <person name="van Nimwegen E."/>
            <person name="Verardo R."/>
            <person name="Wei C.L."/>
            <person name="Yagi K."/>
            <person name="Yamanishi H."/>
            <person name="Zabarovsky E."/>
            <person name="Zhu S."/>
            <person name="Zimmer A."/>
            <person name="Hide W."/>
            <person name="Bult C."/>
            <person name="Grimmond S.M."/>
            <person name="Teasdale R.D."/>
            <person name="Liu E.T."/>
            <person name="Brusic V."/>
            <person name="Quackenbush J."/>
            <person name="Wahlestedt C."/>
            <person name="Mattick J.S."/>
            <person name="Hume D.A."/>
            <person name="Kai C."/>
            <person name="Sasaki D."/>
            <person name="Tomaru Y."/>
            <person name="Fukuda S."/>
            <person name="Kanamori-Katayama M."/>
            <person name="Suzuki M."/>
            <person name="Aoki J."/>
            <person name="Arakawa T."/>
            <person name="Iida J."/>
            <person name="Imamura K."/>
            <person name="Itoh M."/>
            <person name="Kato T."/>
            <person name="Kawaji H."/>
            <person name="Kawagashira N."/>
            <person name="Kawashima T."/>
            <person name="Kojima M."/>
            <person name="Kondo S."/>
            <person name="Konno H."/>
            <person name="Nakano K."/>
            <person name="Ninomiya N."/>
            <person name="Nishio T."/>
            <person name="Okada M."/>
            <person name="Plessy C."/>
            <person name="Shibata K."/>
            <person name="Shiraki T."/>
            <person name="Suzuki S."/>
            <person name="Tagami M."/>
            <person name="Waki K."/>
            <person name="Watahiki A."/>
            <person name="Okamura-Oho Y."/>
            <person name="Suzuki H."/>
            <person name="Kawai J."/>
            <person name="Hayashizaki Y."/>
        </authorList>
    </citation>
    <scope>NUCLEOTIDE SEQUENCE [LARGE SCALE MRNA]</scope>
    <source>
        <strain>C57BL/6J</strain>
        <tissue>Head</tissue>
        <tissue>Lung</tissue>
        <tissue>Ovary</tissue>
    </source>
</reference>
<reference key="3">
    <citation type="journal article" date="2003" name="J. Cell Biol.">
        <title>Cloning of the first sn1-DAG lipases points to the spatial and temporal regulation of endocannabinoid signaling in the brain.</title>
        <authorList>
            <person name="Bisogno T."/>
            <person name="Howell F."/>
            <person name="Williams G."/>
            <person name="Minassi A."/>
            <person name="Cascio M.G."/>
            <person name="Ligresti A."/>
            <person name="Matias I."/>
            <person name="Schiano-Moriello A."/>
            <person name="Paul P."/>
            <person name="Williams E.-J."/>
            <person name="Gangadharan U."/>
            <person name="Hobbs C."/>
            <person name="Di Marzo V."/>
            <person name="Doherty P."/>
        </authorList>
    </citation>
    <scope>TISSUE SPECIFICITY</scope>
</reference>
<reference key="4">
    <citation type="journal article" date="2010" name="Cell">
        <title>A tissue-specific atlas of mouse protein phosphorylation and expression.</title>
        <authorList>
            <person name="Huttlin E.L."/>
            <person name="Jedrychowski M.P."/>
            <person name="Elias J.E."/>
            <person name="Goswami T."/>
            <person name="Rad R."/>
            <person name="Beausoleil S.A."/>
            <person name="Villen J."/>
            <person name="Haas W."/>
            <person name="Sowa M.E."/>
            <person name="Gygi S.P."/>
        </authorList>
    </citation>
    <scope>PHOSPHORYLATION [LARGE SCALE ANALYSIS] AT SER-582</scope>
    <scope>IDENTIFICATION BY MASS SPECTROMETRY [LARGE SCALE ANALYSIS]</scope>
    <source>
        <tissue>Brain</tissue>
        <tissue>Liver</tissue>
    </source>
</reference>
<reference key="5">
    <citation type="journal article" date="2010" name="J. Neurosci.">
        <title>Loss of retrograde endocannabinoid signaling and reduced adult neurogenesis in diacylglycerol lipase knock-out mice.</title>
        <authorList>
            <person name="Gao Y."/>
            <person name="Vasilyev D.V."/>
            <person name="Goncalves M.B."/>
            <person name="Howell F.V."/>
            <person name="Hobbs C."/>
            <person name="Reisenberg M."/>
            <person name="Shen R."/>
            <person name="Zhang M.Y."/>
            <person name="Strassle B.W."/>
            <person name="Lu P."/>
            <person name="Mark L."/>
            <person name="Piesla M.J."/>
            <person name="Deng K."/>
            <person name="Kouranova E.V."/>
            <person name="Ring R.H."/>
            <person name="Whiteside G.T."/>
            <person name="Bates B."/>
            <person name="Walsh F.S."/>
            <person name="Williams G."/>
            <person name="Pangalos M.N."/>
            <person name="Samad T.A."/>
            <person name="Doherty P."/>
        </authorList>
    </citation>
    <scope>DISRUPTION PHENOTYPE</scope>
    <scope>TISSUE SPECIFICITY</scope>
    <scope>FUNCTION</scope>
</reference>
<reference key="6">
    <citation type="journal article" date="2010" name="Neuron">
        <title>The endocannabinoid 2-arachidonoylglycerol produced by diacylglycerol lipase alpha mediates retrograde suppression of synaptic transmission.</title>
        <authorList>
            <person name="Tanimura A."/>
            <person name="Yamazaki M."/>
            <person name="Hashimotodani Y."/>
            <person name="Uchigashima M."/>
            <person name="Kawata S."/>
            <person name="Abe M."/>
            <person name="Kita Y."/>
            <person name="Hashimoto K."/>
            <person name="Shimizu T."/>
            <person name="Watanabe M."/>
            <person name="Sakimura K."/>
            <person name="Kano M."/>
        </authorList>
    </citation>
    <scope>DISRUPTION PHENOTYPE</scope>
    <scope>TISSUE SPECIFICITY</scope>
    <scope>FUNCTION</scope>
</reference>
<reference key="7">
    <citation type="journal article" date="2012" name="Nat. Chem. Biol.">
        <title>DAGLbeta inhibition perturbs a lipid network involved in macrophage inflammatory responses.</title>
        <authorList>
            <person name="Hsu K.L."/>
            <person name="Tsuboi K."/>
            <person name="Adibekian A."/>
            <person name="Pugh H."/>
            <person name="Masuda K."/>
            <person name="Cravatt B.F."/>
        </authorList>
    </citation>
    <scope>ACTIVITY REGULATION</scope>
    <scope>CATALYTIC ACTIVITY</scope>
    <scope>FUNCTION</scope>
    <scope>DISRUPTION PHENOTYPE</scope>
    <scope>TISSUE SPECIFICITY</scope>
</reference>
<reference key="8">
    <citation type="journal article" date="2016" name="Elife">
        <title>A chemical proteomic atlas of brain serine hydrolases identifies cell type-specific pathways regulating neuroinflammation.</title>
        <authorList>
            <person name="Viader A."/>
            <person name="Ogasawara D."/>
            <person name="Joslyn C.M."/>
            <person name="Sanchez-Alavez M."/>
            <person name="Mori S."/>
            <person name="Nguyen W."/>
            <person name="Conti B."/>
            <person name="Cravatt B.F."/>
        </authorList>
    </citation>
    <scope>DISRUPTION PHENOTYPE</scope>
    <scope>TISSUE SPECIFICITY</scope>
    <scope>FUNCTION</scope>
</reference>
<reference key="9">
    <citation type="journal article" date="2020" name="Cell Chem. Biol.">
        <title>DAGL-Beta Functions as a PUFA-Specific Triacylglycerol Lipase in Macrophages.</title>
        <authorList>
            <person name="Shin M."/>
            <person name="Ware T.B."/>
            <person name="Hsu K.L."/>
        </authorList>
    </citation>
    <scope>CATALYTIC ACTIVITY</scope>
    <scope>FUNCTION</scope>
    <scope>TISSUE SPECIFICITY</scope>
    <scope>ACTIVITY REGULATION</scope>
</reference>
<accession>Q91WC9</accession>
<accession>Q8BU39</accession>
<accession>Q8BU97</accession>
<accession>Q8BV05</accession>
<proteinExistence type="evidence at protein level"/>
<sequence>MPGMVLFGRRWSLASDDLVFPGSFELFLRVLWWIVSLTLYLTHRRRLDCPGGVLLSTYLIVLLVLLAVIICTVLAIVCVSMRGTICNPGPRKSMSKLLYIRLALFLPEMVWASLGAAWVAKGIQCDRTVVIGIIATVIVSWIVIAATMVTIIFVFDPLGGKMAPYPPCIPEHLDSNSSNRLLTGLKTAAKSVWETRVQFCCCCVGQDDNTRVAFSSTADLFSTYFSDTDLVPSDIAAGFTLLHQQQDNISHSREPPEVVTHTPGQPQETELDAEVENCHHYMPFAAAAYGWPLYIYRNPFTGLCRIGGDCCRARDIEYDAVEGDQHNCHFASILKTTGLQYRDFIHISFHDKVYELPFIVVLDHRKESVVVAVRGTMSLQDVLTDLSAESETLELGIELQDCVAHKGIAQAARYIHRRLVNDGILSQAFSVAPEYQLVLVGHSLGAGAAALLAIMLRGAYPQVRAYAFSPPRGLLSKSLYEYSKDFVVSLILGMDVIPRLSVTNMEDLKRRILRVIANCNKPKYKILLHGCWYGLFGGSPDNFPTELDEGTQGALTQPLLGEQTLLTRYSPGYCSSDSPLDSPTKYPTLYPPGRIIHLEEEGGSGRFGCCSAAQYRARWAHEAEFSKILIGPKMLIDHMPDVMIRALDRVLADRTACVSCPGQGGSSVP</sequence>
<gene>
    <name type="primary">Daglb</name>
</gene>
<keyword id="KW-0106">Calcium</keyword>
<keyword id="KW-1003">Cell membrane</keyword>
<keyword id="KW-0378">Hydrolase</keyword>
<keyword id="KW-0442">Lipid degradation</keyword>
<keyword id="KW-0443">Lipid metabolism</keyword>
<keyword id="KW-0472">Membrane</keyword>
<keyword id="KW-0479">Metal-binding</keyword>
<keyword id="KW-0597">Phosphoprotein</keyword>
<keyword id="KW-1185">Reference proteome</keyword>
<keyword id="KW-0812">Transmembrane</keyword>
<keyword id="KW-1133">Transmembrane helix</keyword>
<dbReference type="EC" id="3.1.1.116" evidence="6"/>
<dbReference type="EC" id="3.1.1.3" evidence="8"/>
<dbReference type="EMBL" id="AK081509">
    <property type="protein sequence ID" value="BAC38241.1"/>
    <property type="molecule type" value="mRNA"/>
</dbReference>
<dbReference type="EMBL" id="AK086747">
    <property type="protein sequence ID" value="BAC39734.1"/>
    <property type="status" value="ALT_FRAME"/>
    <property type="molecule type" value="mRNA"/>
</dbReference>
<dbReference type="EMBL" id="AK087884">
    <property type="protein sequence ID" value="BAC40033.1"/>
    <property type="molecule type" value="mRNA"/>
</dbReference>
<dbReference type="EMBL" id="AK136372">
    <property type="protein sequence ID" value="BAE22951.1"/>
    <property type="molecule type" value="mRNA"/>
</dbReference>
<dbReference type="EMBL" id="BC016105">
    <property type="protein sequence ID" value="AAH16105.2"/>
    <property type="molecule type" value="mRNA"/>
</dbReference>
<dbReference type="CCDS" id="CCDS39370.1"/>
<dbReference type="RefSeq" id="NP_659164.2">
    <property type="nucleotide sequence ID" value="NM_144915.3"/>
</dbReference>
<dbReference type="SMR" id="Q91WC9"/>
<dbReference type="BioGRID" id="231186">
    <property type="interactions" value="1"/>
</dbReference>
<dbReference type="FunCoup" id="Q91WC9">
    <property type="interactions" value="2097"/>
</dbReference>
<dbReference type="STRING" id="10090.ENSMUSP00000043088"/>
<dbReference type="BindingDB" id="Q91WC9"/>
<dbReference type="ChEMBL" id="CHEMBL5656"/>
<dbReference type="ESTHER" id="mouse-DGLB">
    <property type="family name" value="Lipase_3"/>
</dbReference>
<dbReference type="iPTMnet" id="Q91WC9"/>
<dbReference type="PhosphoSitePlus" id="Q91WC9"/>
<dbReference type="SwissPalm" id="Q91WC9"/>
<dbReference type="jPOST" id="Q91WC9"/>
<dbReference type="PaxDb" id="10090-ENSMUSP00000043088"/>
<dbReference type="PeptideAtlas" id="Q91WC9"/>
<dbReference type="ProteomicsDB" id="279861"/>
<dbReference type="Antibodypedia" id="24853">
    <property type="antibodies" value="95 antibodies from 20 providers"/>
</dbReference>
<dbReference type="DNASU" id="231871"/>
<dbReference type="Ensembl" id="ENSMUST00000045593.12">
    <property type="protein sequence ID" value="ENSMUSP00000043088.9"/>
    <property type="gene ID" value="ENSMUSG00000039206.14"/>
</dbReference>
<dbReference type="GeneID" id="231871"/>
<dbReference type="KEGG" id="mmu:231871"/>
<dbReference type="UCSC" id="uc009akj.1">
    <property type="organism name" value="mouse"/>
</dbReference>
<dbReference type="AGR" id="MGI:2442032"/>
<dbReference type="CTD" id="221955"/>
<dbReference type="MGI" id="MGI:2442032">
    <property type="gene designation" value="Daglb"/>
</dbReference>
<dbReference type="VEuPathDB" id="HostDB:ENSMUSG00000039206"/>
<dbReference type="eggNOG" id="KOG2088">
    <property type="taxonomic scope" value="Eukaryota"/>
</dbReference>
<dbReference type="GeneTree" id="ENSGT00940000156486"/>
<dbReference type="HOGENOM" id="CLU_008300_2_1_1"/>
<dbReference type="InParanoid" id="Q91WC9"/>
<dbReference type="OMA" id="KVWECRL"/>
<dbReference type="OrthoDB" id="438440at2759"/>
<dbReference type="PhylomeDB" id="Q91WC9"/>
<dbReference type="TreeFam" id="TF312928"/>
<dbReference type="BRENDA" id="3.1.1.116">
    <property type="organism ID" value="3474"/>
</dbReference>
<dbReference type="Reactome" id="R-MMU-426048">
    <property type="pathway name" value="Arachidonate production from DAG"/>
</dbReference>
<dbReference type="BioGRID-ORCS" id="231871">
    <property type="hits" value="1 hit in 81 CRISPR screens"/>
</dbReference>
<dbReference type="ChiTaRS" id="Daglb">
    <property type="organism name" value="mouse"/>
</dbReference>
<dbReference type="PRO" id="PR:Q91WC9"/>
<dbReference type="Proteomes" id="UP000000589">
    <property type="component" value="Chromosome 5"/>
</dbReference>
<dbReference type="RNAct" id="Q91WC9">
    <property type="molecule type" value="protein"/>
</dbReference>
<dbReference type="Bgee" id="ENSMUSG00000039206">
    <property type="expression patterns" value="Expressed in stroma of bone marrow and 219 other cell types or tissues"/>
</dbReference>
<dbReference type="GO" id="GO:0005654">
    <property type="term" value="C:nucleoplasm"/>
    <property type="evidence" value="ECO:0007669"/>
    <property type="project" value="Ensembl"/>
</dbReference>
<dbReference type="GO" id="GO:0005886">
    <property type="term" value="C:plasma membrane"/>
    <property type="evidence" value="ECO:0000250"/>
    <property type="project" value="UniProtKB"/>
</dbReference>
<dbReference type="GO" id="GO:0016298">
    <property type="term" value="F:lipase activity"/>
    <property type="evidence" value="ECO:0000314"/>
    <property type="project" value="UniProtKB"/>
</dbReference>
<dbReference type="GO" id="GO:0046872">
    <property type="term" value="F:metal ion binding"/>
    <property type="evidence" value="ECO:0007669"/>
    <property type="project" value="UniProtKB-KW"/>
</dbReference>
<dbReference type="GO" id="GO:0047372">
    <property type="term" value="F:monoacylglycerol lipase activity"/>
    <property type="evidence" value="ECO:0000315"/>
    <property type="project" value="MGI"/>
</dbReference>
<dbReference type="GO" id="GO:0004806">
    <property type="term" value="F:triacylglycerol lipase activity"/>
    <property type="evidence" value="ECO:0000314"/>
    <property type="project" value="UniProtKB"/>
</dbReference>
<dbReference type="GO" id="GO:0019369">
    <property type="term" value="P:arachidonate metabolic process"/>
    <property type="evidence" value="ECO:0000314"/>
    <property type="project" value="UniProtKB"/>
</dbReference>
<dbReference type="GO" id="GO:1901696">
    <property type="term" value="P:cannabinoid biosynthetic process"/>
    <property type="evidence" value="ECO:0000315"/>
    <property type="project" value="MGI"/>
</dbReference>
<dbReference type="GO" id="GO:0006690">
    <property type="term" value="P:icosanoid metabolic process"/>
    <property type="evidence" value="ECO:0000315"/>
    <property type="project" value="UniProtKB"/>
</dbReference>
<dbReference type="GO" id="GO:0016042">
    <property type="term" value="P:lipid catabolic process"/>
    <property type="evidence" value="ECO:0007669"/>
    <property type="project" value="UniProtKB-KW"/>
</dbReference>
<dbReference type="GO" id="GO:0006640">
    <property type="term" value="P:monoacylglycerol biosynthetic process"/>
    <property type="evidence" value="ECO:0000315"/>
    <property type="project" value="MGI"/>
</dbReference>
<dbReference type="GO" id="GO:0007405">
    <property type="term" value="P:neuroblast proliferation"/>
    <property type="evidence" value="ECO:0000315"/>
    <property type="project" value="MGI"/>
</dbReference>
<dbReference type="GO" id="GO:0022008">
    <property type="term" value="P:neurogenesis"/>
    <property type="evidence" value="ECO:0000315"/>
    <property type="project" value="MGI"/>
</dbReference>
<dbReference type="GO" id="GO:0010898">
    <property type="term" value="P:positive regulation of triglyceride catabolic process"/>
    <property type="evidence" value="ECO:0000314"/>
    <property type="project" value="UniProtKB"/>
</dbReference>
<dbReference type="GO" id="GO:0001516">
    <property type="term" value="P:prostaglandin biosynthetic process"/>
    <property type="evidence" value="ECO:0000315"/>
    <property type="project" value="UniProtKB"/>
</dbReference>
<dbReference type="GO" id="GO:0050727">
    <property type="term" value="P:regulation of inflammatory response"/>
    <property type="evidence" value="ECO:0000315"/>
    <property type="project" value="UniProtKB"/>
</dbReference>
<dbReference type="CDD" id="cd00519">
    <property type="entry name" value="Lipase_3"/>
    <property type="match status" value="1"/>
</dbReference>
<dbReference type="FunFam" id="3.40.50.1820:FF:000064">
    <property type="entry name" value="Sn1-specific diacylglycerol lipase beta"/>
    <property type="match status" value="1"/>
</dbReference>
<dbReference type="Gene3D" id="3.40.50.1820">
    <property type="entry name" value="alpha/beta hydrolase"/>
    <property type="match status" value="1"/>
</dbReference>
<dbReference type="InterPro" id="IPR029058">
    <property type="entry name" value="AB_hydrolase_fold"/>
</dbReference>
<dbReference type="InterPro" id="IPR052214">
    <property type="entry name" value="DAG_Lipase-Related"/>
</dbReference>
<dbReference type="InterPro" id="IPR002921">
    <property type="entry name" value="Fungal_lipase-type"/>
</dbReference>
<dbReference type="PANTHER" id="PTHR45792">
    <property type="entry name" value="DIACYLGLYCEROL LIPASE HOMOLOG-RELATED"/>
    <property type="match status" value="1"/>
</dbReference>
<dbReference type="PANTHER" id="PTHR45792:SF2">
    <property type="entry name" value="DIACYLGLYCEROL LIPASE-BETA"/>
    <property type="match status" value="1"/>
</dbReference>
<dbReference type="Pfam" id="PF01764">
    <property type="entry name" value="Lipase_3"/>
    <property type="match status" value="1"/>
</dbReference>
<dbReference type="SUPFAM" id="SSF53474">
    <property type="entry name" value="alpha/beta-Hydrolases"/>
    <property type="match status" value="1"/>
</dbReference>
<dbReference type="PROSITE" id="PS00120">
    <property type="entry name" value="LIPASE_SER"/>
    <property type="match status" value="1"/>
</dbReference>
<feature type="chain" id="PRO_0000248351" description="Diacylglycerol lipase-beta">
    <location>
        <begin position="1"/>
        <end position="669"/>
    </location>
</feature>
<feature type="topological domain" description="Cytoplasmic" evidence="2">
    <location>
        <begin position="1"/>
        <end position="17"/>
    </location>
</feature>
<feature type="transmembrane region" description="Helical" evidence="2">
    <location>
        <begin position="18"/>
        <end position="38"/>
    </location>
</feature>
<feature type="topological domain" description="Extracellular" evidence="2">
    <location>
        <begin position="39"/>
        <end position="58"/>
    </location>
</feature>
<feature type="transmembrane region" description="Helical" evidence="2">
    <location>
        <begin position="59"/>
        <end position="79"/>
    </location>
</feature>
<feature type="topological domain" description="Cytoplasmic" evidence="2">
    <location>
        <begin position="80"/>
        <end position="102"/>
    </location>
</feature>
<feature type="transmembrane region" description="Helical" evidence="2">
    <location>
        <begin position="103"/>
        <end position="123"/>
    </location>
</feature>
<feature type="topological domain" description="Extracellular" evidence="2">
    <location>
        <begin position="124"/>
        <end position="128"/>
    </location>
</feature>
<feature type="transmembrane region" description="Helical" evidence="2">
    <location>
        <begin position="129"/>
        <end position="149"/>
    </location>
</feature>
<feature type="topological domain" description="Cytoplasmic" evidence="2">
    <location>
        <begin position="150"/>
        <end position="669"/>
    </location>
</feature>
<feature type="active site" description="Charge relay system" evidence="1">
    <location>
        <position position="443"/>
    </location>
</feature>
<feature type="active site" description="Charge relay system" evidence="1">
    <location>
        <position position="495"/>
    </location>
</feature>
<feature type="modified residue" description="Phosphoserine" evidence="1">
    <location>
        <position position="570"/>
    </location>
</feature>
<feature type="modified residue" description="Phosphoserine" evidence="1">
    <location>
        <position position="578"/>
    </location>
</feature>
<feature type="modified residue" description="Phosphoserine" evidence="17">
    <location>
        <position position="582"/>
    </location>
</feature>
<feature type="sequence conflict" description="In Ref. 1; BAC38241." evidence="14" ref="1">
    <original>A</original>
    <variation>T</variation>
    <location>
        <position position="467"/>
    </location>
</feature>